<sequence>MFQGSSALTLDAKGRISIPTRHRDALMDRAEGRLTLTRHPDGCLLVYPRPEWEEKRAQIAAFPMSARALQRLLLGNAQDVDIDGSGRVLIAPELRNASGMTRDVMLLGMGAHFELWDAASLARREAEDLAQGMPDVLNQFSF</sequence>
<comment type="subunit">
    <text evidence="1">Forms oligomers.</text>
</comment>
<comment type="subcellular location">
    <subcellularLocation>
        <location evidence="1">Cytoplasm</location>
        <location evidence="1">Nucleoid</location>
    </subcellularLocation>
</comment>
<comment type="similarity">
    <text evidence="1">Belongs to the MraZ family.</text>
</comment>
<evidence type="ECO:0000255" key="1">
    <source>
        <dbReference type="HAMAP-Rule" id="MF_01008"/>
    </source>
</evidence>
<evidence type="ECO:0000255" key="2">
    <source>
        <dbReference type="PROSITE-ProRule" id="PRU01076"/>
    </source>
</evidence>
<proteinExistence type="inferred from homology"/>
<accession>Q7VUP5</accession>
<gene>
    <name evidence="1" type="primary">mraZ</name>
    <name type="ordered locus">BP3031</name>
</gene>
<keyword id="KW-0963">Cytoplasm</keyword>
<keyword id="KW-0238">DNA-binding</keyword>
<keyword id="KW-1185">Reference proteome</keyword>
<keyword id="KW-0677">Repeat</keyword>
<keyword id="KW-0804">Transcription</keyword>
<keyword id="KW-0805">Transcription regulation</keyword>
<protein>
    <recommendedName>
        <fullName>Transcriptional regulator MraZ</fullName>
    </recommendedName>
</protein>
<reference key="1">
    <citation type="journal article" date="2003" name="Nat. Genet.">
        <title>Comparative analysis of the genome sequences of Bordetella pertussis, Bordetella parapertussis and Bordetella bronchiseptica.</title>
        <authorList>
            <person name="Parkhill J."/>
            <person name="Sebaihia M."/>
            <person name="Preston A."/>
            <person name="Murphy L.D."/>
            <person name="Thomson N.R."/>
            <person name="Harris D.E."/>
            <person name="Holden M.T.G."/>
            <person name="Churcher C.M."/>
            <person name="Bentley S.D."/>
            <person name="Mungall K.L."/>
            <person name="Cerdeno-Tarraga A.-M."/>
            <person name="Temple L."/>
            <person name="James K.D."/>
            <person name="Harris B."/>
            <person name="Quail M.A."/>
            <person name="Achtman M."/>
            <person name="Atkin R."/>
            <person name="Baker S."/>
            <person name="Basham D."/>
            <person name="Bason N."/>
            <person name="Cherevach I."/>
            <person name="Chillingworth T."/>
            <person name="Collins M."/>
            <person name="Cronin A."/>
            <person name="Davis P."/>
            <person name="Doggett J."/>
            <person name="Feltwell T."/>
            <person name="Goble A."/>
            <person name="Hamlin N."/>
            <person name="Hauser H."/>
            <person name="Holroyd S."/>
            <person name="Jagels K."/>
            <person name="Leather S."/>
            <person name="Moule S."/>
            <person name="Norberczak H."/>
            <person name="O'Neil S."/>
            <person name="Ormond D."/>
            <person name="Price C."/>
            <person name="Rabbinowitsch E."/>
            <person name="Rutter S."/>
            <person name="Sanders M."/>
            <person name="Saunders D."/>
            <person name="Seeger K."/>
            <person name="Sharp S."/>
            <person name="Simmonds M."/>
            <person name="Skelton J."/>
            <person name="Squares R."/>
            <person name="Squares S."/>
            <person name="Stevens K."/>
            <person name="Unwin L."/>
            <person name="Whitehead S."/>
            <person name="Barrell B.G."/>
            <person name="Maskell D.J."/>
        </authorList>
    </citation>
    <scope>NUCLEOTIDE SEQUENCE [LARGE SCALE GENOMIC DNA]</scope>
    <source>
        <strain>Tohama I / ATCC BAA-589 / NCTC 13251</strain>
    </source>
</reference>
<organism>
    <name type="scientific">Bordetella pertussis (strain Tohama I / ATCC BAA-589 / NCTC 13251)</name>
    <dbReference type="NCBI Taxonomy" id="257313"/>
    <lineage>
        <taxon>Bacteria</taxon>
        <taxon>Pseudomonadati</taxon>
        <taxon>Pseudomonadota</taxon>
        <taxon>Betaproteobacteria</taxon>
        <taxon>Burkholderiales</taxon>
        <taxon>Alcaligenaceae</taxon>
        <taxon>Bordetella</taxon>
    </lineage>
</organism>
<dbReference type="EMBL" id="BX640420">
    <property type="protein sequence ID" value="CAE43302.1"/>
    <property type="molecule type" value="Genomic_DNA"/>
</dbReference>
<dbReference type="RefSeq" id="NP_881606.1">
    <property type="nucleotide sequence ID" value="NC_002929.2"/>
</dbReference>
<dbReference type="RefSeq" id="WP_010931263.1">
    <property type="nucleotide sequence ID" value="NZ_CP039022.1"/>
</dbReference>
<dbReference type="SMR" id="Q7VUP5"/>
<dbReference type="STRING" id="257313.BP3031"/>
<dbReference type="PaxDb" id="257313-BP3031"/>
<dbReference type="GeneID" id="93205549"/>
<dbReference type="KEGG" id="bpe:BP3031"/>
<dbReference type="PATRIC" id="fig|257313.5.peg.3277"/>
<dbReference type="eggNOG" id="COG2001">
    <property type="taxonomic scope" value="Bacteria"/>
</dbReference>
<dbReference type="HOGENOM" id="CLU_107907_2_1_4"/>
<dbReference type="Proteomes" id="UP000002676">
    <property type="component" value="Chromosome"/>
</dbReference>
<dbReference type="GO" id="GO:0005737">
    <property type="term" value="C:cytoplasm"/>
    <property type="evidence" value="ECO:0007669"/>
    <property type="project" value="UniProtKB-UniRule"/>
</dbReference>
<dbReference type="GO" id="GO:0009295">
    <property type="term" value="C:nucleoid"/>
    <property type="evidence" value="ECO:0007669"/>
    <property type="project" value="UniProtKB-SubCell"/>
</dbReference>
<dbReference type="GO" id="GO:0003700">
    <property type="term" value="F:DNA-binding transcription factor activity"/>
    <property type="evidence" value="ECO:0007669"/>
    <property type="project" value="UniProtKB-UniRule"/>
</dbReference>
<dbReference type="GO" id="GO:0000976">
    <property type="term" value="F:transcription cis-regulatory region binding"/>
    <property type="evidence" value="ECO:0007669"/>
    <property type="project" value="TreeGrafter"/>
</dbReference>
<dbReference type="GO" id="GO:2000143">
    <property type="term" value="P:negative regulation of DNA-templated transcription initiation"/>
    <property type="evidence" value="ECO:0007669"/>
    <property type="project" value="TreeGrafter"/>
</dbReference>
<dbReference type="CDD" id="cd16321">
    <property type="entry name" value="MraZ_C"/>
    <property type="match status" value="1"/>
</dbReference>
<dbReference type="CDD" id="cd16320">
    <property type="entry name" value="MraZ_N"/>
    <property type="match status" value="1"/>
</dbReference>
<dbReference type="Gene3D" id="3.40.1550.20">
    <property type="entry name" value="Transcriptional regulator MraZ domain"/>
    <property type="match status" value="1"/>
</dbReference>
<dbReference type="HAMAP" id="MF_01008">
    <property type="entry name" value="MraZ"/>
    <property type="match status" value="1"/>
</dbReference>
<dbReference type="InterPro" id="IPR003444">
    <property type="entry name" value="MraZ"/>
</dbReference>
<dbReference type="InterPro" id="IPR035644">
    <property type="entry name" value="MraZ_C"/>
</dbReference>
<dbReference type="InterPro" id="IPR020603">
    <property type="entry name" value="MraZ_dom"/>
</dbReference>
<dbReference type="InterPro" id="IPR035642">
    <property type="entry name" value="MraZ_N"/>
</dbReference>
<dbReference type="InterPro" id="IPR038619">
    <property type="entry name" value="MraZ_sf"/>
</dbReference>
<dbReference type="InterPro" id="IPR007159">
    <property type="entry name" value="SpoVT-AbrB_dom"/>
</dbReference>
<dbReference type="InterPro" id="IPR037914">
    <property type="entry name" value="SpoVT-AbrB_sf"/>
</dbReference>
<dbReference type="NCBIfam" id="TIGR00242">
    <property type="entry name" value="division/cell wall cluster transcriptional repressor MraZ"/>
    <property type="match status" value="1"/>
</dbReference>
<dbReference type="PANTHER" id="PTHR34701">
    <property type="entry name" value="TRANSCRIPTIONAL REGULATOR MRAZ"/>
    <property type="match status" value="1"/>
</dbReference>
<dbReference type="PANTHER" id="PTHR34701:SF1">
    <property type="entry name" value="TRANSCRIPTIONAL REGULATOR MRAZ"/>
    <property type="match status" value="1"/>
</dbReference>
<dbReference type="Pfam" id="PF02381">
    <property type="entry name" value="MraZ"/>
    <property type="match status" value="2"/>
</dbReference>
<dbReference type="SUPFAM" id="SSF89447">
    <property type="entry name" value="AbrB/MazE/MraZ-like"/>
    <property type="match status" value="1"/>
</dbReference>
<dbReference type="PROSITE" id="PS51740">
    <property type="entry name" value="SPOVT_ABRB"/>
    <property type="match status" value="2"/>
</dbReference>
<feature type="chain" id="PRO_0000108464" description="Transcriptional regulator MraZ">
    <location>
        <begin position="1"/>
        <end position="142"/>
    </location>
</feature>
<feature type="domain" description="SpoVT-AbrB 1" evidence="2">
    <location>
        <begin position="5"/>
        <end position="51"/>
    </location>
</feature>
<feature type="domain" description="SpoVT-AbrB 2" evidence="2">
    <location>
        <begin position="77"/>
        <end position="120"/>
    </location>
</feature>
<name>MRAZ_BORPE</name>